<accession>B7MY33</accession>
<keyword id="KW-0808">Transferase</keyword>
<organism>
    <name type="scientific">Escherichia coli O81 (strain ED1a)</name>
    <dbReference type="NCBI Taxonomy" id="585397"/>
    <lineage>
        <taxon>Bacteria</taxon>
        <taxon>Pseudomonadati</taxon>
        <taxon>Pseudomonadota</taxon>
        <taxon>Gammaproteobacteria</taxon>
        <taxon>Enterobacterales</taxon>
        <taxon>Enterobacteriaceae</taxon>
        <taxon>Escherichia</taxon>
    </lineage>
</organism>
<feature type="chain" id="PRO_1000148311" description="Formyl-CoA:oxalate CoA-transferase">
    <location>
        <begin position="1"/>
        <end position="416"/>
    </location>
</feature>
<feature type="active site" description="Nucleophile" evidence="2">
    <location>
        <position position="169"/>
    </location>
</feature>
<feature type="binding site" evidence="1">
    <location>
        <begin position="17"/>
        <end position="18"/>
    </location>
    <ligand>
        <name>CoA</name>
        <dbReference type="ChEBI" id="CHEBI:57287"/>
    </ligand>
</feature>
<feature type="binding site" evidence="2">
    <location>
        <position position="38"/>
    </location>
    <ligand>
        <name>CoA</name>
        <dbReference type="ChEBI" id="CHEBI:57287"/>
    </ligand>
</feature>
<feature type="binding site" evidence="1">
    <location>
        <begin position="72"/>
        <end position="75"/>
    </location>
    <ligand>
        <name>CoA</name>
        <dbReference type="ChEBI" id="CHEBI:57287"/>
    </ligand>
</feature>
<feature type="binding site" evidence="1">
    <location>
        <begin position="96"/>
        <end position="98"/>
    </location>
    <ligand>
        <name>CoA</name>
        <dbReference type="ChEBI" id="CHEBI:57287"/>
    </ligand>
</feature>
<feature type="binding site" evidence="2">
    <location>
        <position position="104"/>
    </location>
    <ligand>
        <name>CoA</name>
        <dbReference type="ChEBI" id="CHEBI:57287"/>
    </ligand>
</feature>
<feature type="binding site" evidence="1">
    <location>
        <begin position="137"/>
        <end position="140"/>
    </location>
    <ligand>
        <name>CoA</name>
        <dbReference type="ChEBI" id="CHEBI:57287"/>
    </ligand>
</feature>
<feature type="binding site" evidence="1">
    <location>
        <begin position="248"/>
        <end position="250"/>
    </location>
    <ligand>
        <name>substrate</name>
    </ligand>
</feature>
<feature type="binding site" evidence="1">
    <location>
        <begin position="273"/>
        <end position="275"/>
    </location>
    <ligand>
        <name>CoA</name>
        <dbReference type="ChEBI" id="CHEBI:57287"/>
    </ligand>
</feature>
<proteinExistence type="inferred from homology"/>
<dbReference type="EC" id="2.8.3.16" evidence="2"/>
<dbReference type="EMBL" id="CU928162">
    <property type="protein sequence ID" value="CAR08999.2"/>
    <property type="molecule type" value="Genomic_DNA"/>
</dbReference>
<dbReference type="RefSeq" id="WP_000106750.1">
    <property type="nucleotide sequence ID" value="NC_011745.1"/>
</dbReference>
<dbReference type="SMR" id="B7MY33"/>
<dbReference type="KEGG" id="ecq:ECED1_2821"/>
<dbReference type="HOGENOM" id="CLU_033975_2_1_6"/>
<dbReference type="UniPathway" id="UPA00540">
    <property type="reaction ID" value="UER00598"/>
</dbReference>
<dbReference type="Proteomes" id="UP000000748">
    <property type="component" value="Chromosome"/>
</dbReference>
<dbReference type="GO" id="GO:0033608">
    <property type="term" value="F:formyl-CoA transferase activity"/>
    <property type="evidence" value="ECO:0007669"/>
    <property type="project" value="UniProtKB-EC"/>
</dbReference>
<dbReference type="GO" id="GO:0033611">
    <property type="term" value="P:oxalate catabolic process"/>
    <property type="evidence" value="ECO:0007669"/>
    <property type="project" value="UniProtKB-UniRule"/>
</dbReference>
<dbReference type="Gene3D" id="3.40.50.10540">
    <property type="entry name" value="Crotonobetainyl-coa:carnitine coa-transferase, domain 1"/>
    <property type="match status" value="1"/>
</dbReference>
<dbReference type="Gene3D" id="3.30.1540.10">
    <property type="entry name" value="formyl-coa transferase, domain 3"/>
    <property type="match status" value="1"/>
</dbReference>
<dbReference type="HAMAP" id="MF_00742">
    <property type="entry name" value="Formyl_CoA_transfer"/>
    <property type="match status" value="1"/>
</dbReference>
<dbReference type="InterPro" id="IPR050483">
    <property type="entry name" value="CoA-transferase_III_domain"/>
</dbReference>
<dbReference type="InterPro" id="IPR003673">
    <property type="entry name" value="CoA-Trfase_fam_III"/>
</dbReference>
<dbReference type="InterPro" id="IPR044855">
    <property type="entry name" value="CoA-Trfase_III_dom3_sf"/>
</dbReference>
<dbReference type="InterPro" id="IPR023606">
    <property type="entry name" value="CoA-Trfase_III_dom_1_sf"/>
</dbReference>
<dbReference type="InterPro" id="IPR017659">
    <property type="entry name" value="Formyl_CoA_transfer"/>
</dbReference>
<dbReference type="NCBIfam" id="TIGR03253">
    <property type="entry name" value="oxalate_frc"/>
    <property type="match status" value="1"/>
</dbReference>
<dbReference type="NCBIfam" id="NF003809">
    <property type="entry name" value="PRK05398.1"/>
    <property type="match status" value="1"/>
</dbReference>
<dbReference type="PANTHER" id="PTHR48207">
    <property type="entry name" value="SUCCINATE--HYDROXYMETHYLGLUTARATE COA-TRANSFERASE"/>
    <property type="match status" value="1"/>
</dbReference>
<dbReference type="PANTHER" id="PTHR48207:SF3">
    <property type="entry name" value="SUCCINATE--HYDROXYMETHYLGLUTARATE COA-TRANSFERASE"/>
    <property type="match status" value="1"/>
</dbReference>
<dbReference type="Pfam" id="PF02515">
    <property type="entry name" value="CoA_transf_3"/>
    <property type="match status" value="1"/>
</dbReference>
<dbReference type="SUPFAM" id="SSF89796">
    <property type="entry name" value="CoA-transferase family III (CaiB/BaiF)"/>
    <property type="match status" value="1"/>
</dbReference>
<comment type="function">
    <text evidence="1">Involved in the catabolism of oxalate and in the adapatation to low pH via the induction of the oxalate-dependent acid tolerance response (ATR). Catalyzes the transfer of the CoA moiety from formyl-CoA to oxalate (By similarity).</text>
</comment>
<comment type="catalytic activity">
    <reaction evidence="2">
        <text>formyl-CoA + oxalate = oxalyl-CoA + formate</text>
        <dbReference type="Rhea" id="RHEA:16545"/>
        <dbReference type="ChEBI" id="CHEBI:15740"/>
        <dbReference type="ChEBI" id="CHEBI:30623"/>
        <dbReference type="ChEBI" id="CHEBI:57376"/>
        <dbReference type="ChEBI" id="CHEBI:57388"/>
        <dbReference type="EC" id="2.8.3.16"/>
    </reaction>
</comment>
<comment type="pathway">
    <text evidence="2">Metabolic intermediate degradation; oxalate degradation; CO(2) and formate from oxalate: step 1/2.</text>
</comment>
<comment type="subunit">
    <text evidence="2">Homodimer.</text>
</comment>
<comment type="similarity">
    <text evidence="2">Belongs to the CoA-transferase III family. Frc subfamily.</text>
</comment>
<reference key="1">
    <citation type="journal article" date="2009" name="PLoS Genet.">
        <title>Organised genome dynamics in the Escherichia coli species results in highly diverse adaptive paths.</title>
        <authorList>
            <person name="Touchon M."/>
            <person name="Hoede C."/>
            <person name="Tenaillon O."/>
            <person name="Barbe V."/>
            <person name="Baeriswyl S."/>
            <person name="Bidet P."/>
            <person name="Bingen E."/>
            <person name="Bonacorsi S."/>
            <person name="Bouchier C."/>
            <person name="Bouvet O."/>
            <person name="Calteau A."/>
            <person name="Chiapello H."/>
            <person name="Clermont O."/>
            <person name="Cruveiller S."/>
            <person name="Danchin A."/>
            <person name="Diard M."/>
            <person name="Dossat C."/>
            <person name="Karoui M.E."/>
            <person name="Frapy E."/>
            <person name="Garry L."/>
            <person name="Ghigo J.M."/>
            <person name="Gilles A.M."/>
            <person name="Johnson J."/>
            <person name="Le Bouguenec C."/>
            <person name="Lescat M."/>
            <person name="Mangenot S."/>
            <person name="Martinez-Jehanne V."/>
            <person name="Matic I."/>
            <person name="Nassif X."/>
            <person name="Oztas S."/>
            <person name="Petit M.A."/>
            <person name="Pichon C."/>
            <person name="Rouy Z."/>
            <person name="Ruf C.S."/>
            <person name="Schneider D."/>
            <person name="Tourret J."/>
            <person name="Vacherie B."/>
            <person name="Vallenet D."/>
            <person name="Medigue C."/>
            <person name="Rocha E.P.C."/>
            <person name="Denamur E."/>
        </authorList>
    </citation>
    <scope>NUCLEOTIDE SEQUENCE [LARGE SCALE GENOMIC DNA]</scope>
    <source>
        <strain>ED1a</strain>
    </source>
</reference>
<name>FCTA_ECO81</name>
<gene>
    <name evidence="2" type="primary">frc</name>
    <name type="ordered locus">ECED1_2821</name>
</gene>
<sequence length="416" mass="45876">MSTPLQGIKVLDFTGVQSGPSCTQMLAWFGADVIKIERPGFGDVTRHQLRDIPDIDALYFTMLNSNKRSIELNTKTAEGKEVMEKLIREADILVENFHPGAIDHMGFTWEHIQEINPRLIFGSIKGFDECSPYVNVKAYENVAQAAGGAASTTGFWDGPPLVSAAALGDSNTGMHLLIGLLAALLHREKTGRGQRVTMSMQDAVLNLCRVKLRDQQRLDKLGYLEEYPQYPNGTFGDAVPRGGNAGGGGQPGWILKCKGWETDPNAYIYFTIQEQNWENTCKAIGKPEWITDPAYSTAHARQPHIFDIFAEIEKYTVTIDKHEAVAYLTQFDIPCAPVLSMKEISLDPSLRQSGSVVEVEQPLRGKYLTVGCPMKFSAFTPDIKAAPLLGEHTAAVLQELGYSDDEIAAMKQNHAI</sequence>
<evidence type="ECO:0000250" key="1"/>
<evidence type="ECO:0000255" key="2">
    <source>
        <dbReference type="HAMAP-Rule" id="MF_00742"/>
    </source>
</evidence>
<protein>
    <recommendedName>
        <fullName>Formyl-CoA:oxalate CoA-transferase</fullName>
        <shortName>FCOCT</shortName>
        <ecNumber evidence="2">2.8.3.16</ecNumber>
    </recommendedName>
    <alternativeName>
        <fullName evidence="2">Formyl-coenzyme A transferase</fullName>
        <shortName evidence="2">Formyl-CoA transferase</shortName>
    </alternativeName>
</protein>